<dbReference type="EMBL" id="CU329670">
    <property type="protein sequence ID" value="CAB16238.1"/>
    <property type="molecule type" value="Genomic_DNA"/>
</dbReference>
<dbReference type="PIR" id="T38305">
    <property type="entry name" value="T38305"/>
</dbReference>
<dbReference type="RefSeq" id="NP_593802.1">
    <property type="nucleotide sequence ID" value="NM_001019231.2"/>
</dbReference>
<dbReference type="SMR" id="O13942"/>
<dbReference type="FunCoup" id="O13942">
    <property type="interactions" value="19"/>
</dbReference>
<dbReference type="PaxDb" id="4896-SPAC23H3.12c.1"/>
<dbReference type="EnsemblFungi" id="SPAC23H3.12c.1">
    <property type="protein sequence ID" value="SPAC23H3.12c.1:pep"/>
    <property type="gene ID" value="SPAC23H3.12c"/>
</dbReference>
<dbReference type="KEGG" id="spo:2541865"/>
<dbReference type="PomBase" id="SPAC23H3.12c"/>
<dbReference type="VEuPathDB" id="FungiDB:SPAC23H3.12c"/>
<dbReference type="eggNOG" id="KOG4539">
    <property type="taxonomic scope" value="Eukaryota"/>
</dbReference>
<dbReference type="HOGENOM" id="CLU_043838_2_0_1"/>
<dbReference type="InParanoid" id="O13942"/>
<dbReference type="OMA" id="PFFYLAY"/>
<dbReference type="PhylomeDB" id="O13942"/>
<dbReference type="PRO" id="PR:O13942"/>
<dbReference type="Proteomes" id="UP000002485">
    <property type="component" value="Chromosome I"/>
</dbReference>
<dbReference type="GO" id="GO:0005743">
    <property type="term" value="C:mitochondrial inner membrane"/>
    <property type="evidence" value="ECO:0000318"/>
    <property type="project" value="GO_Central"/>
</dbReference>
<dbReference type="GO" id="GO:0005739">
    <property type="term" value="C:mitochondrion"/>
    <property type="evidence" value="ECO:0007005"/>
    <property type="project" value="PomBase"/>
</dbReference>
<dbReference type="GO" id="GO:0140141">
    <property type="term" value="P:mitochondrial potassium ion transmembrane transport"/>
    <property type="evidence" value="ECO:0000266"/>
    <property type="project" value="PomBase"/>
</dbReference>
<dbReference type="GO" id="GO:0006813">
    <property type="term" value="P:potassium ion transport"/>
    <property type="evidence" value="ECO:0000318"/>
    <property type="project" value="GO_Central"/>
</dbReference>
<dbReference type="GO" id="GO:1902600">
    <property type="term" value="P:proton transmembrane transport"/>
    <property type="evidence" value="ECO:0000318"/>
    <property type="project" value="GO_Central"/>
</dbReference>
<dbReference type="InterPro" id="IPR018786">
    <property type="entry name" value="Mit_KHE1"/>
</dbReference>
<dbReference type="PANTHER" id="PTHR28062">
    <property type="entry name" value="K+-H+ EXCHANGE-LIKE PROTEIN"/>
    <property type="match status" value="1"/>
</dbReference>
<dbReference type="PANTHER" id="PTHR28062:SF1">
    <property type="entry name" value="TRANSMEMBRANE PROTEIN"/>
    <property type="match status" value="1"/>
</dbReference>
<dbReference type="Pfam" id="PF10173">
    <property type="entry name" value="Mit_KHE1"/>
    <property type="match status" value="1"/>
</dbReference>
<sequence>MRIIALPLPNQRVFLHCYPSEYLAKKVTIHDKIINRIYKYWDSWSASKSYTKQKVVSLGNRILHATPYEENFLRAIAPVKKLNDTELHQTLYIEHPPNLESSTILAELNRSKQLQKTHTNYLIGNIIGLPLTIPFILIPLIPNIPGFYLCYRAYCNFRAIQGSIQLARVMSIENIQMQESEKLEKALKLFTNGDATPLNALIGHPDFVDRYKRAVAQEQRKSKIIK</sequence>
<reference key="1">
    <citation type="journal article" date="2002" name="Nature">
        <title>The genome sequence of Schizosaccharomyces pombe.</title>
        <authorList>
            <person name="Wood V."/>
            <person name="Gwilliam R."/>
            <person name="Rajandream M.A."/>
            <person name="Lyne M.H."/>
            <person name="Lyne R."/>
            <person name="Stewart A."/>
            <person name="Sgouros J.G."/>
            <person name="Peat N."/>
            <person name="Hayles J."/>
            <person name="Baker S.G."/>
            <person name="Basham D."/>
            <person name="Bowman S."/>
            <person name="Brooks K."/>
            <person name="Brown D."/>
            <person name="Brown S."/>
            <person name="Chillingworth T."/>
            <person name="Churcher C.M."/>
            <person name="Collins M."/>
            <person name="Connor R."/>
            <person name="Cronin A."/>
            <person name="Davis P."/>
            <person name="Feltwell T."/>
            <person name="Fraser A."/>
            <person name="Gentles S."/>
            <person name="Goble A."/>
            <person name="Hamlin N."/>
            <person name="Harris D.E."/>
            <person name="Hidalgo J."/>
            <person name="Hodgson G."/>
            <person name="Holroyd S."/>
            <person name="Hornsby T."/>
            <person name="Howarth S."/>
            <person name="Huckle E.J."/>
            <person name="Hunt S."/>
            <person name="Jagels K."/>
            <person name="James K.D."/>
            <person name="Jones L."/>
            <person name="Jones M."/>
            <person name="Leather S."/>
            <person name="McDonald S."/>
            <person name="McLean J."/>
            <person name="Mooney P."/>
            <person name="Moule S."/>
            <person name="Mungall K.L."/>
            <person name="Murphy L.D."/>
            <person name="Niblett D."/>
            <person name="Odell C."/>
            <person name="Oliver K."/>
            <person name="O'Neil S."/>
            <person name="Pearson D."/>
            <person name="Quail M.A."/>
            <person name="Rabbinowitsch E."/>
            <person name="Rutherford K.M."/>
            <person name="Rutter S."/>
            <person name="Saunders D."/>
            <person name="Seeger K."/>
            <person name="Sharp S."/>
            <person name="Skelton J."/>
            <person name="Simmonds M.N."/>
            <person name="Squares R."/>
            <person name="Squares S."/>
            <person name="Stevens K."/>
            <person name="Taylor K."/>
            <person name="Taylor R.G."/>
            <person name="Tivey A."/>
            <person name="Walsh S.V."/>
            <person name="Warren T."/>
            <person name="Whitehead S."/>
            <person name="Woodward J.R."/>
            <person name="Volckaert G."/>
            <person name="Aert R."/>
            <person name="Robben J."/>
            <person name="Grymonprez B."/>
            <person name="Weltjens I."/>
            <person name="Vanstreels E."/>
            <person name="Rieger M."/>
            <person name="Schaefer M."/>
            <person name="Mueller-Auer S."/>
            <person name="Gabel C."/>
            <person name="Fuchs M."/>
            <person name="Duesterhoeft A."/>
            <person name="Fritzc C."/>
            <person name="Holzer E."/>
            <person name="Moestl D."/>
            <person name="Hilbert H."/>
            <person name="Borzym K."/>
            <person name="Langer I."/>
            <person name="Beck A."/>
            <person name="Lehrach H."/>
            <person name="Reinhardt R."/>
            <person name="Pohl T.M."/>
            <person name="Eger P."/>
            <person name="Zimmermann W."/>
            <person name="Wedler H."/>
            <person name="Wambutt R."/>
            <person name="Purnelle B."/>
            <person name="Goffeau A."/>
            <person name="Cadieu E."/>
            <person name="Dreano S."/>
            <person name="Gloux S."/>
            <person name="Lelaure V."/>
            <person name="Mottier S."/>
            <person name="Galibert F."/>
            <person name="Aves S.J."/>
            <person name="Xiang Z."/>
            <person name="Hunt C."/>
            <person name="Moore K."/>
            <person name="Hurst S.M."/>
            <person name="Lucas M."/>
            <person name="Rochet M."/>
            <person name="Gaillardin C."/>
            <person name="Tallada V.A."/>
            <person name="Garzon A."/>
            <person name="Thode G."/>
            <person name="Daga R.R."/>
            <person name="Cruzado L."/>
            <person name="Jimenez J."/>
            <person name="Sanchez M."/>
            <person name="del Rey F."/>
            <person name="Benito J."/>
            <person name="Dominguez A."/>
            <person name="Revuelta J.L."/>
            <person name="Moreno S."/>
            <person name="Armstrong J."/>
            <person name="Forsburg S.L."/>
            <person name="Cerutti L."/>
            <person name="Lowe T."/>
            <person name="McCombie W.R."/>
            <person name="Paulsen I."/>
            <person name="Potashkin J."/>
            <person name="Shpakovski G.V."/>
            <person name="Ussery D."/>
            <person name="Barrell B.G."/>
            <person name="Nurse P."/>
        </authorList>
    </citation>
    <scope>NUCLEOTIDE SEQUENCE [LARGE SCALE GENOMIC DNA]</scope>
    <source>
        <strain>972 / ATCC 24843</strain>
    </source>
</reference>
<keyword id="KW-0472">Membrane</keyword>
<keyword id="KW-1185">Reference proteome</keyword>
<keyword id="KW-0812">Transmembrane</keyword>
<keyword id="KW-1133">Transmembrane helix</keyword>
<comment type="subcellular location">
    <subcellularLocation>
        <location evidence="2">Membrane</location>
        <topology evidence="2">Single-pass membrane protein</topology>
    </subcellularLocation>
</comment>
<comment type="similarity">
    <text evidence="2">To yeast YDL183c.</text>
</comment>
<feature type="chain" id="PRO_0000116728" description="Uncharacterized protein C23H3.12c">
    <location>
        <begin position="1"/>
        <end position="226"/>
    </location>
</feature>
<feature type="transmembrane region" description="Helical" evidence="1">
    <location>
        <begin position="121"/>
        <end position="141"/>
    </location>
</feature>
<proteinExistence type="predicted"/>
<accession>O13942</accession>
<evidence type="ECO:0000255" key="1"/>
<evidence type="ECO:0000305" key="2"/>
<gene>
    <name type="ORF">SPAC23H3.12c</name>
</gene>
<organism>
    <name type="scientific">Schizosaccharomyces pombe (strain 972 / ATCC 24843)</name>
    <name type="common">Fission yeast</name>
    <dbReference type="NCBI Taxonomy" id="284812"/>
    <lineage>
        <taxon>Eukaryota</taxon>
        <taxon>Fungi</taxon>
        <taxon>Dikarya</taxon>
        <taxon>Ascomycota</taxon>
        <taxon>Taphrinomycotina</taxon>
        <taxon>Schizosaccharomycetes</taxon>
        <taxon>Schizosaccharomycetales</taxon>
        <taxon>Schizosaccharomycetaceae</taxon>
        <taxon>Schizosaccharomyces</taxon>
    </lineage>
</organism>
<protein>
    <recommendedName>
        <fullName>Uncharacterized protein C23H3.12c</fullName>
    </recommendedName>
</protein>
<name>YEPC_SCHPO</name>